<comment type="function">
    <text evidence="1">Catalyzes the phosphorolysis of diverse nucleosides, yielding D-ribose 1-phosphate and the respective free bases. Can use uridine, adenosine, guanosine, cytidine, thymidine, inosine and xanthosine as substrates. Also catalyzes the reverse reactions.</text>
</comment>
<comment type="catalytic activity">
    <reaction evidence="1">
        <text>a purine D-ribonucleoside + phosphate = a purine nucleobase + alpha-D-ribose 1-phosphate</text>
        <dbReference type="Rhea" id="RHEA:19805"/>
        <dbReference type="ChEBI" id="CHEBI:26386"/>
        <dbReference type="ChEBI" id="CHEBI:43474"/>
        <dbReference type="ChEBI" id="CHEBI:57720"/>
        <dbReference type="ChEBI" id="CHEBI:142355"/>
        <dbReference type="EC" id="2.4.2.1"/>
    </reaction>
</comment>
<comment type="catalytic activity">
    <reaction evidence="1">
        <text>adenosine + phosphate = alpha-D-ribose 1-phosphate + adenine</text>
        <dbReference type="Rhea" id="RHEA:27642"/>
        <dbReference type="ChEBI" id="CHEBI:16335"/>
        <dbReference type="ChEBI" id="CHEBI:16708"/>
        <dbReference type="ChEBI" id="CHEBI:43474"/>
        <dbReference type="ChEBI" id="CHEBI:57720"/>
        <dbReference type="EC" id="2.4.2.1"/>
    </reaction>
</comment>
<comment type="catalytic activity">
    <reaction evidence="1">
        <text>cytidine + phosphate = cytosine + alpha-D-ribose 1-phosphate</text>
        <dbReference type="Rhea" id="RHEA:52540"/>
        <dbReference type="ChEBI" id="CHEBI:16040"/>
        <dbReference type="ChEBI" id="CHEBI:17562"/>
        <dbReference type="ChEBI" id="CHEBI:43474"/>
        <dbReference type="ChEBI" id="CHEBI:57720"/>
        <dbReference type="EC" id="2.4.2.2"/>
    </reaction>
</comment>
<comment type="catalytic activity">
    <reaction evidence="1">
        <text>guanosine + phosphate = alpha-D-ribose 1-phosphate + guanine</text>
        <dbReference type="Rhea" id="RHEA:13233"/>
        <dbReference type="ChEBI" id="CHEBI:16235"/>
        <dbReference type="ChEBI" id="CHEBI:16750"/>
        <dbReference type="ChEBI" id="CHEBI:43474"/>
        <dbReference type="ChEBI" id="CHEBI:57720"/>
        <dbReference type="EC" id="2.4.2.1"/>
    </reaction>
</comment>
<comment type="catalytic activity">
    <reaction evidence="1">
        <text>inosine + phosphate = alpha-D-ribose 1-phosphate + hypoxanthine</text>
        <dbReference type="Rhea" id="RHEA:27646"/>
        <dbReference type="ChEBI" id="CHEBI:17368"/>
        <dbReference type="ChEBI" id="CHEBI:17596"/>
        <dbReference type="ChEBI" id="CHEBI:43474"/>
        <dbReference type="ChEBI" id="CHEBI:57720"/>
        <dbReference type="EC" id="2.4.2.1"/>
    </reaction>
</comment>
<comment type="catalytic activity">
    <reaction evidence="1">
        <text>thymidine + phosphate = 2-deoxy-alpha-D-ribose 1-phosphate + thymine</text>
        <dbReference type="Rhea" id="RHEA:16037"/>
        <dbReference type="ChEBI" id="CHEBI:17748"/>
        <dbReference type="ChEBI" id="CHEBI:17821"/>
        <dbReference type="ChEBI" id="CHEBI:43474"/>
        <dbReference type="ChEBI" id="CHEBI:57259"/>
        <dbReference type="EC" id="2.4.2.2"/>
    </reaction>
</comment>
<comment type="catalytic activity">
    <reaction evidence="1">
        <text>uridine + phosphate = alpha-D-ribose 1-phosphate + uracil</text>
        <dbReference type="Rhea" id="RHEA:24388"/>
        <dbReference type="ChEBI" id="CHEBI:16704"/>
        <dbReference type="ChEBI" id="CHEBI:17568"/>
        <dbReference type="ChEBI" id="CHEBI:43474"/>
        <dbReference type="ChEBI" id="CHEBI:57720"/>
        <dbReference type="EC" id="2.4.2.2"/>
    </reaction>
</comment>
<comment type="catalytic activity">
    <reaction evidence="1">
        <text>xanthosine + phosphate = alpha-D-ribose 1-phosphate + xanthine</text>
        <dbReference type="Rhea" id="RHEA:27638"/>
        <dbReference type="ChEBI" id="CHEBI:17712"/>
        <dbReference type="ChEBI" id="CHEBI:18107"/>
        <dbReference type="ChEBI" id="CHEBI:43474"/>
        <dbReference type="ChEBI" id="CHEBI:57720"/>
        <dbReference type="EC" id="2.4.2.1"/>
    </reaction>
</comment>
<comment type="similarity">
    <text evidence="1">Belongs to the nucleoside phosphorylase PpnP family.</text>
</comment>
<feature type="chain" id="PRO_0000298695" description="Pyrimidine/purine nucleoside phosphorylase">
    <location>
        <begin position="1"/>
        <end position="94"/>
    </location>
</feature>
<reference key="1">
    <citation type="journal article" date="2006" name="Mol. Microbiol.">
        <title>Role of pathogenicity island-associated integrases in the genome plasticity of uropathogenic Escherichia coli strain 536.</title>
        <authorList>
            <person name="Hochhut B."/>
            <person name="Wilde C."/>
            <person name="Balling G."/>
            <person name="Middendorf B."/>
            <person name="Dobrindt U."/>
            <person name="Brzuszkiewicz E."/>
            <person name="Gottschalk G."/>
            <person name="Carniel E."/>
            <person name="Hacker J."/>
        </authorList>
    </citation>
    <scope>NUCLEOTIDE SEQUENCE [LARGE SCALE GENOMIC DNA]</scope>
    <source>
        <strain>536 / UPEC</strain>
    </source>
</reference>
<evidence type="ECO:0000255" key="1">
    <source>
        <dbReference type="HAMAP-Rule" id="MF_01537"/>
    </source>
</evidence>
<sequence length="94" mass="10234">MLQSNEYFSGKVKSIGFSSSSTGRASVGVMVEGEYTFSTAEPEEMTVISGALNVLLPDATDWQVYEAGSVFNVPGHSEFHLQVAEPTSYLCRYL</sequence>
<protein>
    <recommendedName>
        <fullName evidence="1">Pyrimidine/purine nucleoside phosphorylase</fullName>
        <ecNumber evidence="1">2.4.2.1</ecNumber>
        <ecNumber evidence="1">2.4.2.2</ecNumber>
    </recommendedName>
    <alternativeName>
        <fullName evidence="1">Adenosine phosphorylase</fullName>
    </alternativeName>
    <alternativeName>
        <fullName evidence="1">Cytidine phosphorylase</fullName>
    </alternativeName>
    <alternativeName>
        <fullName evidence="1">Guanosine phosphorylase</fullName>
    </alternativeName>
    <alternativeName>
        <fullName evidence="1">Inosine phosphorylase</fullName>
    </alternativeName>
    <alternativeName>
        <fullName evidence="1">Thymidine phosphorylase</fullName>
    </alternativeName>
    <alternativeName>
        <fullName evidence="1">Uridine phosphorylase</fullName>
    </alternativeName>
    <alternativeName>
        <fullName evidence="1">Xanthosine phosphorylase</fullName>
    </alternativeName>
</protein>
<organism>
    <name type="scientific">Escherichia coli O6:K15:H31 (strain 536 / UPEC)</name>
    <dbReference type="NCBI Taxonomy" id="362663"/>
    <lineage>
        <taxon>Bacteria</taxon>
        <taxon>Pseudomonadati</taxon>
        <taxon>Pseudomonadota</taxon>
        <taxon>Gammaproteobacteria</taxon>
        <taxon>Enterobacterales</taxon>
        <taxon>Enterobacteriaceae</taxon>
        <taxon>Escherichia</taxon>
    </lineage>
</organism>
<proteinExistence type="inferred from homology"/>
<dbReference type="EC" id="2.4.2.1" evidence="1"/>
<dbReference type="EC" id="2.4.2.2" evidence="1"/>
<dbReference type="EMBL" id="CP000247">
    <property type="protein sequence ID" value="ABG68482.1"/>
    <property type="molecule type" value="Genomic_DNA"/>
</dbReference>
<dbReference type="RefSeq" id="WP_000941942.1">
    <property type="nucleotide sequence ID" value="NC_008253.1"/>
</dbReference>
<dbReference type="SMR" id="Q0TKP9"/>
<dbReference type="GeneID" id="93777070"/>
<dbReference type="KEGG" id="ecp:ECP_0451"/>
<dbReference type="HOGENOM" id="CLU_157874_0_0_6"/>
<dbReference type="Proteomes" id="UP000009182">
    <property type="component" value="Chromosome"/>
</dbReference>
<dbReference type="GO" id="GO:0005829">
    <property type="term" value="C:cytosol"/>
    <property type="evidence" value="ECO:0007669"/>
    <property type="project" value="TreeGrafter"/>
</dbReference>
<dbReference type="GO" id="GO:0047975">
    <property type="term" value="F:guanosine phosphorylase activity"/>
    <property type="evidence" value="ECO:0007669"/>
    <property type="project" value="UniProtKB-EC"/>
</dbReference>
<dbReference type="GO" id="GO:0004731">
    <property type="term" value="F:purine-nucleoside phosphorylase activity"/>
    <property type="evidence" value="ECO:0007669"/>
    <property type="project" value="UniProtKB-UniRule"/>
</dbReference>
<dbReference type="GO" id="GO:0009032">
    <property type="term" value="F:thymidine phosphorylase activity"/>
    <property type="evidence" value="ECO:0007669"/>
    <property type="project" value="UniProtKB-EC"/>
</dbReference>
<dbReference type="GO" id="GO:0004850">
    <property type="term" value="F:uridine phosphorylase activity"/>
    <property type="evidence" value="ECO:0007669"/>
    <property type="project" value="UniProtKB-EC"/>
</dbReference>
<dbReference type="CDD" id="cd20296">
    <property type="entry name" value="cupin_PpnP-like"/>
    <property type="match status" value="1"/>
</dbReference>
<dbReference type="FunFam" id="2.60.120.10:FF:000016">
    <property type="entry name" value="Pyrimidine/purine nucleoside phosphorylase"/>
    <property type="match status" value="1"/>
</dbReference>
<dbReference type="Gene3D" id="2.60.120.10">
    <property type="entry name" value="Jelly Rolls"/>
    <property type="match status" value="1"/>
</dbReference>
<dbReference type="HAMAP" id="MF_01537">
    <property type="entry name" value="Nucleos_phosphorylase_PpnP"/>
    <property type="match status" value="1"/>
</dbReference>
<dbReference type="InterPro" id="IPR009664">
    <property type="entry name" value="Ppnp"/>
</dbReference>
<dbReference type="InterPro" id="IPR014710">
    <property type="entry name" value="RmlC-like_jellyroll"/>
</dbReference>
<dbReference type="InterPro" id="IPR011051">
    <property type="entry name" value="RmlC_Cupin_sf"/>
</dbReference>
<dbReference type="NCBIfam" id="NF007875">
    <property type="entry name" value="PRK10579.1"/>
    <property type="match status" value="1"/>
</dbReference>
<dbReference type="PANTHER" id="PTHR36540">
    <property type="entry name" value="PYRIMIDINE/PURINE NUCLEOSIDE PHOSPHORYLASE"/>
    <property type="match status" value="1"/>
</dbReference>
<dbReference type="PANTHER" id="PTHR36540:SF1">
    <property type="entry name" value="PYRIMIDINE_PURINE NUCLEOSIDE PHOSPHORYLASE"/>
    <property type="match status" value="1"/>
</dbReference>
<dbReference type="Pfam" id="PF06865">
    <property type="entry name" value="Ppnp"/>
    <property type="match status" value="1"/>
</dbReference>
<dbReference type="SUPFAM" id="SSF51182">
    <property type="entry name" value="RmlC-like cupins"/>
    <property type="match status" value="1"/>
</dbReference>
<keyword id="KW-0328">Glycosyltransferase</keyword>
<keyword id="KW-0808">Transferase</keyword>
<accession>Q0TKP9</accession>
<name>PPNP_ECOL5</name>
<gene>
    <name evidence="1" type="primary">ppnP</name>
    <name type="ordered locus">ECP_0451</name>
</gene>